<name>XGPT_SHISS</name>
<protein>
    <recommendedName>
        <fullName evidence="1">Xanthine-guanine phosphoribosyltransferase</fullName>
        <shortName evidence="1">XGPRT</shortName>
        <ecNumber evidence="1">2.4.2.-</ecNumber>
        <ecNumber evidence="1">2.4.2.22</ecNumber>
    </recommendedName>
    <alternativeName>
        <fullName evidence="1">Xanthine phosphoribosyltransferase</fullName>
    </alternativeName>
</protein>
<feature type="chain" id="PRO_0000139688" description="Xanthine-guanine phosphoribosyltransferase">
    <location>
        <begin position="1"/>
        <end position="152"/>
    </location>
</feature>
<feature type="binding site" evidence="1">
    <location>
        <begin position="37"/>
        <end position="38"/>
    </location>
    <ligand>
        <name>5-phospho-alpha-D-ribose 1-diphosphate</name>
        <dbReference type="ChEBI" id="CHEBI:58017"/>
    </ligand>
</feature>
<feature type="binding site" evidence="1">
    <location>
        <position position="69"/>
    </location>
    <ligand>
        <name>5-phospho-alpha-D-ribose 1-diphosphate</name>
        <dbReference type="ChEBI" id="CHEBI:58017"/>
    </ligand>
</feature>
<feature type="binding site" evidence="1">
    <location>
        <position position="69"/>
    </location>
    <ligand>
        <name>GMP</name>
        <dbReference type="ChEBI" id="CHEBI:58115"/>
    </ligand>
</feature>
<feature type="binding site" evidence="1">
    <location>
        <begin position="88"/>
        <end position="96"/>
    </location>
    <ligand>
        <name>5-phospho-alpha-D-ribose 1-diphosphate</name>
        <dbReference type="ChEBI" id="CHEBI:58017"/>
    </ligand>
</feature>
<feature type="binding site" evidence="1">
    <location>
        <position position="89"/>
    </location>
    <ligand>
        <name>Mg(2+)</name>
        <dbReference type="ChEBI" id="CHEBI:18420"/>
    </ligand>
</feature>
<feature type="binding site" evidence="1">
    <location>
        <begin position="92"/>
        <end position="96"/>
    </location>
    <ligand>
        <name>GMP</name>
        <dbReference type="ChEBI" id="CHEBI:58115"/>
    </ligand>
</feature>
<feature type="binding site" evidence="1">
    <location>
        <position position="92"/>
    </location>
    <ligand>
        <name>guanine</name>
        <dbReference type="ChEBI" id="CHEBI:16235"/>
    </ligand>
</feature>
<feature type="binding site" evidence="1">
    <location>
        <position position="92"/>
    </location>
    <ligand>
        <name>xanthine</name>
        <dbReference type="ChEBI" id="CHEBI:17712"/>
    </ligand>
</feature>
<feature type="binding site" evidence="1">
    <location>
        <begin position="134"/>
        <end position="135"/>
    </location>
    <ligand>
        <name>GMP</name>
        <dbReference type="ChEBI" id="CHEBI:58115"/>
    </ligand>
</feature>
<feature type="binding site" evidence="1">
    <location>
        <position position="135"/>
    </location>
    <ligand>
        <name>guanine</name>
        <dbReference type="ChEBI" id="CHEBI:16235"/>
    </ligand>
</feature>
<feature type="binding site" evidence="1">
    <location>
        <position position="135"/>
    </location>
    <ligand>
        <name>xanthine</name>
        <dbReference type="ChEBI" id="CHEBI:17712"/>
    </ligand>
</feature>
<organism>
    <name type="scientific">Shigella sonnei (strain Ss046)</name>
    <dbReference type="NCBI Taxonomy" id="300269"/>
    <lineage>
        <taxon>Bacteria</taxon>
        <taxon>Pseudomonadati</taxon>
        <taxon>Pseudomonadota</taxon>
        <taxon>Gammaproteobacteria</taxon>
        <taxon>Enterobacterales</taxon>
        <taxon>Enterobacteriaceae</taxon>
        <taxon>Shigella</taxon>
    </lineage>
</organism>
<accession>Q3Z599</accession>
<proteinExistence type="inferred from homology"/>
<keyword id="KW-0997">Cell inner membrane</keyword>
<keyword id="KW-1003">Cell membrane</keyword>
<keyword id="KW-0328">Glycosyltransferase</keyword>
<keyword id="KW-0460">Magnesium</keyword>
<keyword id="KW-0472">Membrane</keyword>
<keyword id="KW-0479">Metal-binding</keyword>
<keyword id="KW-0660">Purine salvage</keyword>
<keyword id="KW-1185">Reference proteome</keyword>
<keyword id="KW-0808">Transferase</keyword>
<dbReference type="EC" id="2.4.2.-" evidence="1"/>
<dbReference type="EC" id="2.4.2.22" evidence="1"/>
<dbReference type="EMBL" id="CP000038">
    <property type="protein sequence ID" value="AAZ87063.1"/>
    <property type="molecule type" value="Genomic_DNA"/>
</dbReference>
<dbReference type="RefSeq" id="WP_001291990.1">
    <property type="nucleotide sequence ID" value="NC_007384.1"/>
</dbReference>
<dbReference type="SMR" id="Q3Z599"/>
<dbReference type="GeneID" id="93777155"/>
<dbReference type="KEGG" id="ssn:SSON_0280"/>
<dbReference type="HOGENOM" id="CLU_080904_3_0_6"/>
<dbReference type="UniPathway" id="UPA00602">
    <property type="reaction ID" value="UER00658"/>
</dbReference>
<dbReference type="UniPathway" id="UPA00909">
    <property type="reaction ID" value="UER00887"/>
</dbReference>
<dbReference type="Proteomes" id="UP000002529">
    <property type="component" value="Chromosome"/>
</dbReference>
<dbReference type="GO" id="GO:0005829">
    <property type="term" value="C:cytosol"/>
    <property type="evidence" value="ECO:0007669"/>
    <property type="project" value="TreeGrafter"/>
</dbReference>
<dbReference type="GO" id="GO:0005886">
    <property type="term" value="C:plasma membrane"/>
    <property type="evidence" value="ECO:0007669"/>
    <property type="project" value="UniProtKB-SubCell"/>
</dbReference>
<dbReference type="GO" id="GO:0052657">
    <property type="term" value="F:guanine phosphoribosyltransferase activity"/>
    <property type="evidence" value="ECO:0007669"/>
    <property type="project" value="RHEA"/>
</dbReference>
<dbReference type="GO" id="GO:0004422">
    <property type="term" value="F:hypoxanthine phosphoribosyltransferase activity"/>
    <property type="evidence" value="ECO:0007669"/>
    <property type="project" value="TreeGrafter"/>
</dbReference>
<dbReference type="GO" id="GO:0000287">
    <property type="term" value="F:magnesium ion binding"/>
    <property type="evidence" value="ECO:0007669"/>
    <property type="project" value="UniProtKB-UniRule"/>
</dbReference>
<dbReference type="GO" id="GO:0000310">
    <property type="term" value="F:xanthine phosphoribosyltransferase activity"/>
    <property type="evidence" value="ECO:0007669"/>
    <property type="project" value="UniProtKB-UniRule"/>
</dbReference>
<dbReference type="GO" id="GO:0032263">
    <property type="term" value="P:GMP salvage"/>
    <property type="evidence" value="ECO:0007669"/>
    <property type="project" value="UniProtKB-UniRule"/>
</dbReference>
<dbReference type="GO" id="GO:0032264">
    <property type="term" value="P:IMP salvage"/>
    <property type="evidence" value="ECO:0007669"/>
    <property type="project" value="TreeGrafter"/>
</dbReference>
<dbReference type="GO" id="GO:0006166">
    <property type="term" value="P:purine ribonucleoside salvage"/>
    <property type="evidence" value="ECO:0007669"/>
    <property type="project" value="UniProtKB-KW"/>
</dbReference>
<dbReference type="GO" id="GO:0032265">
    <property type="term" value="P:XMP salvage"/>
    <property type="evidence" value="ECO:0007669"/>
    <property type="project" value="UniProtKB-UniRule"/>
</dbReference>
<dbReference type="CDD" id="cd06223">
    <property type="entry name" value="PRTases_typeI"/>
    <property type="match status" value="1"/>
</dbReference>
<dbReference type="FunFam" id="3.40.50.2020:FF:000009">
    <property type="entry name" value="Xanthine phosphoribosyltransferase"/>
    <property type="match status" value="1"/>
</dbReference>
<dbReference type="Gene3D" id="3.40.50.2020">
    <property type="match status" value="1"/>
</dbReference>
<dbReference type="HAMAP" id="MF_01903">
    <property type="entry name" value="XGPRT"/>
    <property type="match status" value="1"/>
</dbReference>
<dbReference type="InterPro" id="IPR000836">
    <property type="entry name" value="PRibTrfase_dom"/>
</dbReference>
<dbReference type="InterPro" id="IPR029057">
    <property type="entry name" value="PRTase-like"/>
</dbReference>
<dbReference type="InterPro" id="IPR023747">
    <property type="entry name" value="Xanthine_Guanine_PRibTrfase"/>
</dbReference>
<dbReference type="NCBIfam" id="NF006613">
    <property type="entry name" value="PRK09177.1"/>
    <property type="match status" value="1"/>
</dbReference>
<dbReference type="PANTHER" id="PTHR39563">
    <property type="entry name" value="XANTHINE PHOSPHORIBOSYLTRANSFERASE"/>
    <property type="match status" value="1"/>
</dbReference>
<dbReference type="PANTHER" id="PTHR39563:SF1">
    <property type="entry name" value="XANTHINE-GUANINE PHOSPHORIBOSYLTRANSFERASE"/>
    <property type="match status" value="1"/>
</dbReference>
<dbReference type="Pfam" id="PF00156">
    <property type="entry name" value="Pribosyltran"/>
    <property type="match status" value="1"/>
</dbReference>
<dbReference type="SUPFAM" id="SSF53271">
    <property type="entry name" value="PRTase-like"/>
    <property type="match status" value="1"/>
</dbReference>
<dbReference type="PROSITE" id="PS00103">
    <property type="entry name" value="PUR_PYR_PR_TRANSFER"/>
    <property type="match status" value="1"/>
</dbReference>
<gene>
    <name evidence="1" type="primary">gpt</name>
    <name type="ordered locus">SSON_0280</name>
</gene>
<sequence length="152" mass="16971">MSEKYIVTWDMLQIHARKLASRLMPSEQWKGIIAVSRGGLVPGALLARELGIRHVDTVCISSYDHDNQRELKVLKRAEGDGEGFIVIDDLVDTGGTAVAIREMYPKAHFVTIFAKPAGRPLVDDYVVDIPQDTWIEQPWDMGVVFVPPISGR</sequence>
<reference key="1">
    <citation type="journal article" date="2005" name="Nucleic Acids Res.">
        <title>Genome dynamics and diversity of Shigella species, the etiologic agents of bacillary dysentery.</title>
        <authorList>
            <person name="Yang F."/>
            <person name="Yang J."/>
            <person name="Zhang X."/>
            <person name="Chen L."/>
            <person name="Jiang Y."/>
            <person name="Yan Y."/>
            <person name="Tang X."/>
            <person name="Wang J."/>
            <person name="Xiong Z."/>
            <person name="Dong J."/>
            <person name="Xue Y."/>
            <person name="Zhu Y."/>
            <person name="Xu X."/>
            <person name="Sun L."/>
            <person name="Chen S."/>
            <person name="Nie H."/>
            <person name="Peng J."/>
            <person name="Xu J."/>
            <person name="Wang Y."/>
            <person name="Yuan Z."/>
            <person name="Wen Y."/>
            <person name="Yao Z."/>
            <person name="Shen Y."/>
            <person name="Qiang B."/>
            <person name="Hou Y."/>
            <person name="Yu J."/>
            <person name="Jin Q."/>
        </authorList>
    </citation>
    <scope>NUCLEOTIDE SEQUENCE [LARGE SCALE GENOMIC DNA]</scope>
    <source>
        <strain>Ss046</strain>
    </source>
</reference>
<comment type="function">
    <text evidence="1">Purine salvage pathway enzyme that catalyzes the transfer of the ribosyl-5-phosphate group from 5-phospho-alpha-D-ribose 1-diphosphate (PRPP) to the N9 position of the 6-oxopurines guanine and xanthine to form the corresponding ribonucleotides GMP (guanosine 5'-monophosphate) and XMP (xanthosine 5'-monophosphate), with the release of PPi. To a lesser extent, also acts on hypoxanthine.</text>
</comment>
<comment type="catalytic activity">
    <reaction evidence="1">
        <text>GMP + diphosphate = guanine + 5-phospho-alpha-D-ribose 1-diphosphate</text>
        <dbReference type="Rhea" id="RHEA:25424"/>
        <dbReference type="ChEBI" id="CHEBI:16235"/>
        <dbReference type="ChEBI" id="CHEBI:33019"/>
        <dbReference type="ChEBI" id="CHEBI:58017"/>
        <dbReference type="ChEBI" id="CHEBI:58115"/>
    </reaction>
    <physiologicalReaction direction="right-to-left" evidence="1">
        <dbReference type="Rhea" id="RHEA:25426"/>
    </physiologicalReaction>
</comment>
<comment type="catalytic activity">
    <reaction evidence="1">
        <text>XMP + diphosphate = xanthine + 5-phospho-alpha-D-ribose 1-diphosphate</text>
        <dbReference type="Rhea" id="RHEA:10800"/>
        <dbReference type="ChEBI" id="CHEBI:17712"/>
        <dbReference type="ChEBI" id="CHEBI:33019"/>
        <dbReference type="ChEBI" id="CHEBI:57464"/>
        <dbReference type="ChEBI" id="CHEBI:58017"/>
        <dbReference type="EC" id="2.4.2.22"/>
    </reaction>
    <physiologicalReaction direction="right-to-left" evidence="1">
        <dbReference type="Rhea" id="RHEA:10802"/>
    </physiologicalReaction>
</comment>
<comment type="catalytic activity">
    <reaction evidence="1">
        <text>IMP + diphosphate = hypoxanthine + 5-phospho-alpha-D-ribose 1-diphosphate</text>
        <dbReference type="Rhea" id="RHEA:17973"/>
        <dbReference type="ChEBI" id="CHEBI:17368"/>
        <dbReference type="ChEBI" id="CHEBI:33019"/>
        <dbReference type="ChEBI" id="CHEBI:58017"/>
        <dbReference type="ChEBI" id="CHEBI:58053"/>
    </reaction>
    <physiologicalReaction direction="right-to-left" evidence="1">
        <dbReference type="Rhea" id="RHEA:17975"/>
    </physiologicalReaction>
</comment>
<comment type="cofactor">
    <cofactor evidence="1">
        <name>Mg(2+)</name>
        <dbReference type="ChEBI" id="CHEBI:18420"/>
    </cofactor>
</comment>
<comment type="pathway">
    <text evidence="1">Purine metabolism; GMP biosynthesis via salvage pathway; GMP from guanine: step 1/1.</text>
</comment>
<comment type="pathway">
    <text evidence="1">Purine metabolism; XMP biosynthesis via salvage pathway; XMP from xanthine: step 1/1.</text>
</comment>
<comment type="subunit">
    <text evidence="1">Homotetramer.</text>
</comment>
<comment type="subcellular location">
    <subcellularLocation>
        <location evidence="1">Cell inner membrane</location>
        <topology evidence="1">Peripheral membrane protein</topology>
    </subcellularLocation>
</comment>
<comment type="similarity">
    <text evidence="1">Belongs to the purine/pyrimidine phosphoribosyltransferase family. XGPT subfamily.</text>
</comment>
<evidence type="ECO:0000255" key="1">
    <source>
        <dbReference type="HAMAP-Rule" id="MF_01903"/>
    </source>
</evidence>